<gene>
    <name type="primary">OR4C3</name>
</gene>
<organism>
    <name type="scientific">Homo sapiens</name>
    <name type="common">Human</name>
    <dbReference type="NCBI Taxonomy" id="9606"/>
    <lineage>
        <taxon>Eukaryota</taxon>
        <taxon>Metazoa</taxon>
        <taxon>Chordata</taxon>
        <taxon>Craniata</taxon>
        <taxon>Vertebrata</taxon>
        <taxon>Euteleostomi</taxon>
        <taxon>Mammalia</taxon>
        <taxon>Eutheria</taxon>
        <taxon>Euarchontoglires</taxon>
        <taxon>Primates</taxon>
        <taxon>Haplorrhini</taxon>
        <taxon>Catarrhini</taxon>
        <taxon>Hominidae</taxon>
        <taxon>Homo</taxon>
    </lineage>
</organism>
<keyword id="KW-1003">Cell membrane</keyword>
<keyword id="KW-1015">Disulfide bond</keyword>
<keyword id="KW-0297">G-protein coupled receptor</keyword>
<keyword id="KW-0325">Glycoprotein</keyword>
<keyword id="KW-0472">Membrane</keyword>
<keyword id="KW-0552">Olfaction</keyword>
<keyword id="KW-0675">Receptor</keyword>
<keyword id="KW-1185">Reference proteome</keyword>
<keyword id="KW-0716">Sensory transduction</keyword>
<keyword id="KW-0807">Transducer</keyword>
<keyword id="KW-0812">Transmembrane</keyword>
<keyword id="KW-1133">Transmembrane helix</keyword>
<protein>
    <recommendedName>
        <fullName>Olfactory receptor 4C3</fullName>
    </recommendedName>
    <alternativeName>
        <fullName>Olfactory receptor OR11-98</fullName>
    </alternativeName>
</protein>
<accession>Q8NH37</accession>
<accession>B2RNF2</accession>
<accession>Q6IFB3</accession>
<comment type="function">
    <text evidence="3">Odorant receptor.</text>
</comment>
<comment type="subcellular location">
    <subcellularLocation>
        <location>Cell membrane</location>
        <topology>Multi-pass membrane protein</topology>
    </subcellularLocation>
</comment>
<comment type="similarity">
    <text evidence="2">Belongs to the G-protein coupled receptor 1 family.</text>
</comment>
<comment type="sequence caution" evidence="3">
    <conflict type="erroneous initiation">
        <sequence resource="EMBL-CDS" id="AAI36854"/>
    </conflict>
</comment>
<comment type="sequence caution" evidence="3">
    <conflict type="erroneous initiation">
        <sequence resource="EMBL-CDS" id="AAI36855"/>
    </conflict>
</comment>
<comment type="sequence caution" evidence="3">
    <conflict type="erroneous initiation">
        <sequence resource="EMBL-CDS" id="BAC05803"/>
    </conflict>
</comment>
<comment type="sequence caution" evidence="3">
    <conflict type="erroneous initiation">
        <sequence resource="EMBL-CDS" id="DAA04747"/>
    </conflict>
</comment>
<comment type="sequence caution" evidence="3">
    <conflict type="erroneous initiation">
        <sequence resource="EMBL-CDS" id="EAW67868"/>
    </conflict>
</comment>
<comment type="online information" name="Human Olfactory Receptor Data Exploratorium (HORDE)">
    <link uri="http://genome.weizmann.ac.il/horde/card/index/symbol:OR4C3"/>
</comment>
<reference key="1">
    <citation type="submission" date="2001-07" db="EMBL/GenBank/DDBJ databases">
        <title>Genome-wide discovery and analysis of human seven transmembrane helix receptor genes.</title>
        <authorList>
            <person name="Suwa M."/>
            <person name="Sato T."/>
            <person name="Okouchi I."/>
            <person name="Arita M."/>
            <person name="Futami K."/>
            <person name="Matsumoto S."/>
            <person name="Tsutsumi S."/>
            <person name="Aburatani H."/>
            <person name="Asai K."/>
            <person name="Akiyama Y."/>
        </authorList>
    </citation>
    <scope>NUCLEOTIDE SEQUENCE [GENOMIC DNA]</scope>
</reference>
<reference key="2">
    <citation type="journal article" date="2006" name="Nature">
        <title>Human chromosome 11 DNA sequence and analysis including novel gene identification.</title>
        <authorList>
            <person name="Taylor T.D."/>
            <person name="Noguchi H."/>
            <person name="Totoki Y."/>
            <person name="Toyoda A."/>
            <person name="Kuroki Y."/>
            <person name="Dewar K."/>
            <person name="Lloyd C."/>
            <person name="Itoh T."/>
            <person name="Takeda T."/>
            <person name="Kim D.-W."/>
            <person name="She X."/>
            <person name="Barlow K.F."/>
            <person name="Bloom T."/>
            <person name="Bruford E."/>
            <person name="Chang J.L."/>
            <person name="Cuomo C.A."/>
            <person name="Eichler E."/>
            <person name="FitzGerald M.G."/>
            <person name="Jaffe D.B."/>
            <person name="LaButti K."/>
            <person name="Nicol R."/>
            <person name="Park H.-S."/>
            <person name="Seaman C."/>
            <person name="Sougnez C."/>
            <person name="Yang X."/>
            <person name="Zimmer A.R."/>
            <person name="Zody M.C."/>
            <person name="Birren B.W."/>
            <person name="Nusbaum C."/>
            <person name="Fujiyama A."/>
            <person name="Hattori M."/>
            <person name="Rogers J."/>
            <person name="Lander E.S."/>
            <person name="Sakaki Y."/>
        </authorList>
    </citation>
    <scope>NUCLEOTIDE SEQUENCE [LARGE SCALE GENOMIC DNA]</scope>
</reference>
<reference key="3">
    <citation type="submission" date="2005-09" db="EMBL/GenBank/DDBJ databases">
        <authorList>
            <person name="Mural R.J."/>
            <person name="Istrail S."/>
            <person name="Sutton G.G."/>
            <person name="Florea L."/>
            <person name="Halpern A.L."/>
            <person name="Mobarry C.M."/>
            <person name="Lippert R."/>
            <person name="Walenz B."/>
            <person name="Shatkay H."/>
            <person name="Dew I."/>
            <person name="Miller J.R."/>
            <person name="Flanigan M.J."/>
            <person name="Edwards N.J."/>
            <person name="Bolanos R."/>
            <person name="Fasulo D."/>
            <person name="Halldorsson B.V."/>
            <person name="Hannenhalli S."/>
            <person name="Turner R."/>
            <person name="Yooseph S."/>
            <person name="Lu F."/>
            <person name="Nusskern D.R."/>
            <person name="Shue B.C."/>
            <person name="Zheng X.H."/>
            <person name="Zhong F."/>
            <person name="Delcher A.L."/>
            <person name="Huson D.H."/>
            <person name="Kravitz S.A."/>
            <person name="Mouchard L."/>
            <person name="Reinert K."/>
            <person name="Remington K.A."/>
            <person name="Clark A.G."/>
            <person name="Waterman M.S."/>
            <person name="Eichler E.E."/>
            <person name="Adams M.D."/>
            <person name="Hunkapiller M.W."/>
            <person name="Myers E.W."/>
            <person name="Venter J.C."/>
        </authorList>
    </citation>
    <scope>NUCLEOTIDE SEQUENCE [LARGE SCALE GENOMIC DNA]</scope>
</reference>
<reference key="4">
    <citation type="journal article" date="2004" name="Proc. Natl. Acad. Sci. U.S.A.">
        <title>The human olfactory receptor gene family.</title>
        <authorList>
            <person name="Malnic B."/>
            <person name="Godfrey P.A."/>
            <person name="Buck L.B."/>
        </authorList>
    </citation>
    <scope>IDENTIFICATION</scope>
</reference>
<reference key="5">
    <citation type="journal article" date="2004" name="Proc. Natl. Acad. Sci. U.S.A.">
        <authorList>
            <person name="Malnic B."/>
            <person name="Godfrey P.A."/>
            <person name="Buck L.B."/>
        </authorList>
    </citation>
    <scope>ERRATUM OF PUBMED:14983052</scope>
</reference>
<evidence type="ECO:0000255" key="1"/>
<evidence type="ECO:0000255" key="2">
    <source>
        <dbReference type="PROSITE-ProRule" id="PRU00521"/>
    </source>
</evidence>
<evidence type="ECO:0000305" key="3"/>
<feature type="chain" id="PRO_0000150529" description="Olfactory receptor 4C3">
    <location>
        <begin position="1"/>
        <end position="302"/>
    </location>
</feature>
<feature type="topological domain" description="Extracellular" evidence="1">
    <location>
        <begin position="1"/>
        <end position="23"/>
    </location>
</feature>
<feature type="transmembrane region" description="Helical; Name=1" evidence="1">
    <location>
        <begin position="24"/>
        <end position="47"/>
    </location>
</feature>
<feature type="topological domain" description="Cytoplasmic" evidence="1">
    <location>
        <begin position="48"/>
        <end position="55"/>
    </location>
</feature>
<feature type="transmembrane region" description="Helical; Name=2" evidence="1">
    <location>
        <begin position="56"/>
        <end position="77"/>
    </location>
</feature>
<feature type="topological domain" description="Extracellular" evidence="1">
    <location>
        <begin position="78"/>
        <end position="98"/>
    </location>
</feature>
<feature type="transmembrane region" description="Helical; Name=3" evidence="1">
    <location>
        <begin position="99"/>
        <end position="118"/>
    </location>
</feature>
<feature type="topological domain" description="Cytoplasmic" evidence="1">
    <location>
        <begin position="119"/>
        <end position="137"/>
    </location>
</feature>
<feature type="transmembrane region" description="Helical; Name=4" evidence="1">
    <location>
        <begin position="138"/>
        <end position="156"/>
    </location>
</feature>
<feature type="topological domain" description="Extracellular" evidence="1">
    <location>
        <begin position="157"/>
        <end position="193"/>
    </location>
</feature>
<feature type="transmembrane region" description="Helical; Name=5" evidence="1">
    <location>
        <begin position="194"/>
        <end position="217"/>
    </location>
</feature>
<feature type="topological domain" description="Cytoplasmic" evidence="1">
    <location>
        <begin position="218"/>
        <end position="233"/>
    </location>
</feature>
<feature type="transmembrane region" description="Helical; Name=6" evidence="1">
    <location>
        <begin position="234"/>
        <end position="256"/>
    </location>
</feature>
<feature type="topological domain" description="Extracellular" evidence="1">
    <location>
        <begin position="257"/>
        <end position="267"/>
    </location>
</feature>
<feature type="transmembrane region" description="Helical; Name=7" evidence="1">
    <location>
        <begin position="268"/>
        <end position="287"/>
    </location>
</feature>
<feature type="topological domain" description="Cytoplasmic" evidence="1">
    <location>
        <begin position="288"/>
        <end position="302"/>
    </location>
</feature>
<feature type="glycosylation site" description="N-linked (GlcNAc...) asparagine" evidence="1">
    <location>
        <position position="6"/>
    </location>
</feature>
<feature type="disulfide bond" evidence="2">
    <location>
        <begin position="95"/>
        <end position="187"/>
    </location>
</feature>
<name>OR4C3_HUMAN</name>
<sequence length="302" mass="33726">MDIPQNITEFFMLGLSQNSEVQRVLFVVFLLIYVVTVCGNMLIVVTITSSPTLASPVYFFLANLSFIDTFYSSSMAPKLIADSLYEGRTISYECCMAQLFGAHFLGGVEIILLTVMAYDRYVAICKPLHNTTIMTRHLCAMLVGVAWLGGFLHSLVQLLLVLWLPFCGPNVINHFACDLYPLLEVACTNTYVIGLLVVANSGLICLLNFLMLAASYIVILYSLRSHSADGRCKALSTCGAHFIVVALFFVPCIFTYVHPFSTLPIDKNMALFYGILTPMLNPLIYTLRNEEVKNAMRKLFTW</sequence>
<dbReference type="EMBL" id="AB065567">
    <property type="protein sequence ID" value="BAC05803.1"/>
    <property type="status" value="ALT_INIT"/>
    <property type="molecule type" value="Genomic_DNA"/>
</dbReference>
<dbReference type="EMBL" id="AC023080">
    <property type="status" value="NOT_ANNOTATED_CDS"/>
    <property type="molecule type" value="Genomic_DNA"/>
</dbReference>
<dbReference type="EMBL" id="CH471064">
    <property type="protein sequence ID" value="EAW67868.1"/>
    <property type="status" value="ALT_INIT"/>
    <property type="molecule type" value="Genomic_DNA"/>
</dbReference>
<dbReference type="EMBL" id="BC136853">
    <property type="protein sequence ID" value="AAI36854.1"/>
    <property type="status" value="ALT_INIT"/>
    <property type="molecule type" value="mRNA"/>
</dbReference>
<dbReference type="EMBL" id="BC136854">
    <property type="protein sequence ID" value="AAI36855.1"/>
    <property type="status" value="ALT_INIT"/>
    <property type="molecule type" value="mRNA"/>
</dbReference>
<dbReference type="EMBL" id="BK004349">
    <property type="protein sequence ID" value="DAA04747.1"/>
    <property type="status" value="ALT_INIT"/>
    <property type="molecule type" value="Genomic_DNA"/>
</dbReference>
<dbReference type="CCDS" id="CCDS31489.2"/>
<dbReference type="RefSeq" id="NP_001004702.2">
    <property type="nucleotide sequence ID" value="NM_001004702.2"/>
</dbReference>
<dbReference type="SMR" id="Q8NH37"/>
<dbReference type="FunCoup" id="Q8NH37">
    <property type="interactions" value="416"/>
</dbReference>
<dbReference type="STRING" id="9606.ENSP00000493096"/>
<dbReference type="GlyCosmos" id="Q8NH37">
    <property type="glycosylation" value="1 site, No reported glycans"/>
</dbReference>
<dbReference type="GlyGen" id="Q8NH37">
    <property type="glycosylation" value="1 site"/>
</dbReference>
<dbReference type="iPTMnet" id="Q8NH37"/>
<dbReference type="PhosphoSitePlus" id="Q8NH37"/>
<dbReference type="BioMuta" id="OR4C3"/>
<dbReference type="DMDM" id="38372802"/>
<dbReference type="MassIVE" id="Q8NH37"/>
<dbReference type="PaxDb" id="9606-ENSP00000321419"/>
<dbReference type="ProteomicsDB" id="73652"/>
<dbReference type="Antibodypedia" id="63155">
    <property type="antibodies" value="46 antibodies from 17 providers"/>
</dbReference>
<dbReference type="DNASU" id="256144"/>
<dbReference type="Ensembl" id="ENST00000319856.5">
    <property type="protein sequence ID" value="ENSP00000321419.5"/>
    <property type="gene ID" value="ENSG00000176547.11"/>
</dbReference>
<dbReference type="GeneID" id="256144"/>
<dbReference type="KEGG" id="hsa:256144"/>
<dbReference type="MANE-Select" id="ENST00000319856.5">
    <property type="protein sequence ID" value="ENSP00000321419.5"/>
    <property type="RefSeq nucleotide sequence ID" value="NM_001004702.2"/>
    <property type="RefSeq protein sequence ID" value="NP_001004702.2"/>
</dbReference>
<dbReference type="UCSC" id="uc010rhv.3">
    <property type="organism name" value="human"/>
</dbReference>
<dbReference type="AGR" id="HGNC:14697"/>
<dbReference type="CTD" id="256144"/>
<dbReference type="DisGeNET" id="256144"/>
<dbReference type="GeneCards" id="OR4C3"/>
<dbReference type="HGNC" id="HGNC:14697">
    <property type="gene designation" value="OR4C3"/>
</dbReference>
<dbReference type="HPA" id="ENSG00000176547">
    <property type="expression patterns" value="Not detected"/>
</dbReference>
<dbReference type="neXtProt" id="NX_Q8NH37"/>
<dbReference type="PharmGKB" id="PA32261"/>
<dbReference type="VEuPathDB" id="HostDB:ENSG00000176547"/>
<dbReference type="eggNOG" id="ENOG502TK3X">
    <property type="taxonomic scope" value="Eukaryota"/>
</dbReference>
<dbReference type="GeneTree" id="ENSGT00940000163173"/>
<dbReference type="HOGENOM" id="CLU_012526_5_5_1"/>
<dbReference type="InParanoid" id="Q8NH37"/>
<dbReference type="OMA" id="MPHNITE"/>
<dbReference type="OrthoDB" id="10017003at2759"/>
<dbReference type="PAN-GO" id="Q8NH37">
    <property type="GO annotations" value="2 GO annotations based on evolutionary models"/>
</dbReference>
<dbReference type="PhylomeDB" id="Q8NH37"/>
<dbReference type="TreeFam" id="TF337251"/>
<dbReference type="PathwayCommons" id="Q8NH37"/>
<dbReference type="Reactome" id="R-HSA-9752946">
    <property type="pathway name" value="Expression and translocation of olfactory receptors"/>
</dbReference>
<dbReference type="BioGRID-ORCS" id="256144">
    <property type="hits" value="7 hits in 736 CRISPR screens"/>
</dbReference>
<dbReference type="GeneWiki" id="OR4C3"/>
<dbReference type="GenomeRNAi" id="256144"/>
<dbReference type="Pharos" id="Q8NH37">
    <property type="development level" value="Tdark"/>
</dbReference>
<dbReference type="PRO" id="PR:Q8NH37"/>
<dbReference type="Proteomes" id="UP000005640">
    <property type="component" value="Chromosome 11"/>
</dbReference>
<dbReference type="RNAct" id="Q8NH37">
    <property type="molecule type" value="protein"/>
</dbReference>
<dbReference type="Bgee" id="ENSG00000176547">
    <property type="expression patterns" value="Expressed in cortex of kidney"/>
</dbReference>
<dbReference type="ExpressionAtlas" id="Q8NH37">
    <property type="expression patterns" value="baseline and differential"/>
</dbReference>
<dbReference type="GO" id="GO:0005886">
    <property type="term" value="C:plasma membrane"/>
    <property type="evidence" value="ECO:0000318"/>
    <property type="project" value="GO_Central"/>
</dbReference>
<dbReference type="GO" id="GO:0004930">
    <property type="term" value="F:G protein-coupled receptor activity"/>
    <property type="evidence" value="ECO:0007669"/>
    <property type="project" value="UniProtKB-KW"/>
</dbReference>
<dbReference type="GO" id="GO:0004984">
    <property type="term" value="F:olfactory receptor activity"/>
    <property type="evidence" value="ECO:0000318"/>
    <property type="project" value="GO_Central"/>
</dbReference>
<dbReference type="CDD" id="cd15939">
    <property type="entry name" value="7tmA_OR4A-like"/>
    <property type="match status" value="1"/>
</dbReference>
<dbReference type="FunFam" id="1.10.1220.70:FF:000001">
    <property type="entry name" value="Olfactory receptor"/>
    <property type="match status" value="1"/>
</dbReference>
<dbReference type="FunFam" id="1.20.1070.10:FF:000007">
    <property type="entry name" value="Olfactory receptor"/>
    <property type="match status" value="1"/>
</dbReference>
<dbReference type="Gene3D" id="1.20.1070.10">
    <property type="entry name" value="Rhodopsin 7-helix transmembrane proteins"/>
    <property type="match status" value="1"/>
</dbReference>
<dbReference type="InterPro" id="IPR000276">
    <property type="entry name" value="GPCR_Rhodpsn"/>
</dbReference>
<dbReference type="InterPro" id="IPR017452">
    <property type="entry name" value="GPCR_Rhodpsn_7TM"/>
</dbReference>
<dbReference type="InterPro" id="IPR000725">
    <property type="entry name" value="Olfact_rcpt"/>
</dbReference>
<dbReference type="InterPro" id="IPR050427">
    <property type="entry name" value="Olfactory_Receptors"/>
</dbReference>
<dbReference type="PANTHER" id="PTHR48002">
    <property type="entry name" value="OLFACTORY RECEPTOR"/>
    <property type="match status" value="1"/>
</dbReference>
<dbReference type="Pfam" id="PF13853">
    <property type="entry name" value="7tm_4"/>
    <property type="match status" value="1"/>
</dbReference>
<dbReference type="PRINTS" id="PR00237">
    <property type="entry name" value="GPCRRHODOPSN"/>
</dbReference>
<dbReference type="PRINTS" id="PR00245">
    <property type="entry name" value="OLFACTORYR"/>
</dbReference>
<dbReference type="SUPFAM" id="SSF81321">
    <property type="entry name" value="Family A G protein-coupled receptor-like"/>
    <property type="match status" value="1"/>
</dbReference>
<dbReference type="PROSITE" id="PS00237">
    <property type="entry name" value="G_PROTEIN_RECEP_F1_1"/>
    <property type="match status" value="1"/>
</dbReference>
<dbReference type="PROSITE" id="PS50262">
    <property type="entry name" value="G_PROTEIN_RECEP_F1_2"/>
    <property type="match status" value="1"/>
</dbReference>
<proteinExistence type="evidence at transcript level"/>